<proteinExistence type="inferred from homology"/>
<name>RL4_ACIBT</name>
<gene>
    <name evidence="1" type="primary">rplD</name>
    <name type="ordered locus">A1S_3079</name>
</gene>
<accession>A3M982</accession>
<comment type="function">
    <text evidence="1">One of the primary rRNA binding proteins, this protein initially binds near the 5'-end of the 23S rRNA. It is important during the early stages of 50S assembly. It makes multiple contacts with different domains of the 23S rRNA in the assembled 50S subunit and ribosome.</text>
</comment>
<comment type="function">
    <text evidence="1">Forms part of the polypeptide exit tunnel.</text>
</comment>
<comment type="subunit">
    <text evidence="1">Part of the 50S ribosomal subunit.</text>
</comment>
<comment type="similarity">
    <text evidence="1">Belongs to the universal ribosomal protein uL4 family.</text>
</comment>
<evidence type="ECO:0000255" key="1">
    <source>
        <dbReference type="HAMAP-Rule" id="MF_01328"/>
    </source>
</evidence>
<evidence type="ECO:0000256" key="2">
    <source>
        <dbReference type="SAM" id="MobiDB-lite"/>
    </source>
</evidence>
<evidence type="ECO:0000305" key="3"/>
<protein>
    <recommendedName>
        <fullName evidence="1">Large ribosomal subunit protein uL4</fullName>
    </recommendedName>
    <alternativeName>
        <fullName evidence="3">50S ribosomal protein L4</fullName>
    </alternativeName>
</protein>
<reference key="1">
    <citation type="journal article" date="2007" name="Genes Dev.">
        <title>New insights into Acinetobacter baumannii pathogenesis revealed by high-density pyrosequencing and transposon mutagenesis.</title>
        <authorList>
            <person name="Smith M.G."/>
            <person name="Gianoulis T.A."/>
            <person name="Pukatzki S."/>
            <person name="Mekalanos J.J."/>
            <person name="Ornston L.N."/>
            <person name="Gerstein M."/>
            <person name="Snyder M."/>
        </authorList>
    </citation>
    <scope>NUCLEOTIDE SEQUENCE [LARGE SCALE GENOMIC DNA]</scope>
    <source>
        <strain>ATCC 17978 / DSM 105126 / CIP 53.77 / LMG 1025 / NCDC KC755 / 5377</strain>
    </source>
</reference>
<keyword id="KW-0687">Ribonucleoprotein</keyword>
<keyword id="KW-0689">Ribosomal protein</keyword>
<keyword id="KW-0694">RNA-binding</keyword>
<keyword id="KW-0699">rRNA-binding</keyword>
<dbReference type="EMBL" id="CP000521">
    <property type="protein sequence ID" value="ABO13476.1"/>
    <property type="molecule type" value="Genomic_DNA"/>
</dbReference>
<dbReference type="RefSeq" id="WP_001050255.1">
    <property type="nucleotide sequence ID" value="NZ_CP053098.1"/>
</dbReference>
<dbReference type="SMR" id="A3M982"/>
<dbReference type="GeneID" id="92895316"/>
<dbReference type="KEGG" id="acb:A1S_3079"/>
<dbReference type="HOGENOM" id="CLU_041575_5_2_6"/>
<dbReference type="GO" id="GO:1990904">
    <property type="term" value="C:ribonucleoprotein complex"/>
    <property type="evidence" value="ECO:0007669"/>
    <property type="project" value="UniProtKB-KW"/>
</dbReference>
<dbReference type="GO" id="GO:0005840">
    <property type="term" value="C:ribosome"/>
    <property type="evidence" value="ECO:0007669"/>
    <property type="project" value="UniProtKB-KW"/>
</dbReference>
<dbReference type="GO" id="GO:0019843">
    <property type="term" value="F:rRNA binding"/>
    <property type="evidence" value="ECO:0007669"/>
    <property type="project" value="UniProtKB-UniRule"/>
</dbReference>
<dbReference type="GO" id="GO:0003735">
    <property type="term" value="F:structural constituent of ribosome"/>
    <property type="evidence" value="ECO:0007669"/>
    <property type="project" value="InterPro"/>
</dbReference>
<dbReference type="GO" id="GO:0006412">
    <property type="term" value="P:translation"/>
    <property type="evidence" value="ECO:0007669"/>
    <property type="project" value="UniProtKB-UniRule"/>
</dbReference>
<dbReference type="Gene3D" id="3.40.1370.10">
    <property type="match status" value="1"/>
</dbReference>
<dbReference type="HAMAP" id="MF_01328_B">
    <property type="entry name" value="Ribosomal_uL4_B"/>
    <property type="match status" value="1"/>
</dbReference>
<dbReference type="InterPro" id="IPR002136">
    <property type="entry name" value="Ribosomal_uL4"/>
</dbReference>
<dbReference type="InterPro" id="IPR013005">
    <property type="entry name" value="Ribosomal_uL4-like"/>
</dbReference>
<dbReference type="InterPro" id="IPR023574">
    <property type="entry name" value="Ribosomal_uL4_dom_sf"/>
</dbReference>
<dbReference type="NCBIfam" id="TIGR03953">
    <property type="entry name" value="rplD_bact"/>
    <property type="match status" value="1"/>
</dbReference>
<dbReference type="PANTHER" id="PTHR10746">
    <property type="entry name" value="50S RIBOSOMAL PROTEIN L4"/>
    <property type="match status" value="1"/>
</dbReference>
<dbReference type="PANTHER" id="PTHR10746:SF6">
    <property type="entry name" value="LARGE RIBOSOMAL SUBUNIT PROTEIN UL4M"/>
    <property type="match status" value="1"/>
</dbReference>
<dbReference type="Pfam" id="PF00573">
    <property type="entry name" value="Ribosomal_L4"/>
    <property type="match status" value="1"/>
</dbReference>
<dbReference type="SUPFAM" id="SSF52166">
    <property type="entry name" value="Ribosomal protein L4"/>
    <property type="match status" value="1"/>
</dbReference>
<organism>
    <name type="scientific">Acinetobacter baumannii (strain ATCC 17978 / DSM 105126 / CIP 53.77 / LMG 1025 / NCDC KC755 / 5377)</name>
    <dbReference type="NCBI Taxonomy" id="400667"/>
    <lineage>
        <taxon>Bacteria</taxon>
        <taxon>Pseudomonadati</taxon>
        <taxon>Pseudomonadota</taxon>
        <taxon>Gammaproteobacteria</taxon>
        <taxon>Moraxellales</taxon>
        <taxon>Moraxellaceae</taxon>
        <taxon>Acinetobacter</taxon>
        <taxon>Acinetobacter calcoaceticus/baumannii complex</taxon>
    </lineage>
</organism>
<sequence>MNLKTVSGSAVELSEVAFGREFNEALVHQVVTAYLAGGRQGTRAHKSRADVSGGGKKPFRQKGTGRARAGSIRSPIWVGGGKTFAARPQDWSQKVNRKMYRGAMQCILAELVRQDRLVLVEEFAVAAPKTKELLAKLNDLNAARALIVTDAVDENLYLAARNLPHVDVVDATAIDPVSLIAFDKVVMSVAAAKKIEVELG</sequence>
<feature type="chain" id="PRO_1000052345" description="Large ribosomal subunit protein uL4">
    <location>
        <begin position="1"/>
        <end position="200"/>
    </location>
</feature>
<feature type="region of interest" description="Disordered" evidence="2">
    <location>
        <begin position="42"/>
        <end position="65"/>
    </location>
</feature>